<reference key="1">
    <citation type="journal article" date="2003" name="PLoS Biol.">
        <title>The genome sequence of Caenorhabditis briggsae: a platform for comparative genomics.</title>
        <authorList>
            <person name="Stein L.D."/>
            <person name="Bao Z."/>
            <person name="Blasiar D."/>
            <person name="Blumenthal T."/>
            <person name="Brent M.R."/>
            <person name="Chen N."/>
            <person name="Chinwalla A."/>
            <person name="Clarke L."/>
            <person name="Clee C."/>
            <person name="Coghlan A."/>
            <person name="Coulson A."/>
            <person name="D'Eustachio P."/>
            <person name="Fitch D.H.A."/>
            <person name="Fulton L.A."/>
            <person name="Fulton R.E."/>
            <person name="Griffiths-Jones S."/>
            <person name="Harris T.W."/>
            <person name="Hillier L.W."/>
            <person name="Kamath R."/>
            <person name="Kuwabara P.E."/>
            <person name="Mardis E.R."/>
            <person name="Marra M.A."/>
            <person name="Miner T.L."/>
            <person name="Minx P."/>
            <person name="Mullikin J.C."/>
            <person name="Plumb R.W."/>
            <person name="Rogers J."/>
            <person name="Schein J.E."/>
            <person name="Sohrmann M."/>
            <person name="Spieth J."/>
            <person name="Stajich J.E."/>
            <person name="Wei C."/>
            <person name="Willey D."/>
            <person name="Wilson R.K."/>
            <person name="Durbin R.M."/>
            <person name="Waterston R.H."/>
        </authorList>
    </citation>
    <scope>NUCLEOTIDE SEQUENCE [LARGE SCALE GENOMIC DNA]</scope>
    <source>
        <strain>AF16</strain>
    </source>
</reference>
<protein>
    <recommendedName>
        <fullName>Mediator of RNA polymerase II transcription subunit 31</fullName>
    </recommendedName>
    <alternativeName>
        <fullName>Mediator complex subunit 31</fullName>
    </alternativeName>
    <alternativeName>
        <fullName>Mediator complex subunit soh-1</fullName>
    </alternativeName>
</protein>
<comment type="function">
    <text evidence="1">Component of the Mediator complex, a coactivator involved in the regulated transcription of nearly all RNA polymerase II-dependent genes. Mediator functions as a bridge to convey information from gene-specific regulatory proteins to the basal RNA polymerase II transcription machinery. Mediator is recruited to promoters by direct interactions with regulatory proteins and serves as a scaffold for the assembly of a functional preinitiation complex with RNA polymerase II and the general transcription factors (By similarity).</text>
</comment>
<comment type="subunit">
    <text evidence="1">Component of the Mediator complex.</text>
</comment>
<comment type="subcellular location">
    <subcellularLocation>
        <location evidence="3">Nucleus</location>
    </subcellularLocation>
</comment>
<comment type="similarity">
    <text evidence="3">Belongs to the Mediator complex subunit 31 family.</text>
</comment>
<proteinExistence type="inferred from homology"/>
<feature type="chain" id="PRO_0000305712" description="Mediator of RNA polymerase II transcription subunit 31">
    <location>
        <begin position="1"/>
        <end position="168"/>
    </location>
</feature>
<feature type="region of interest" description="Disordered" evidence="2">
    <location>
        <begin position="113"/>
        <end position="168"/>
    </location>
</feature>
<feature type="compositionally biased region" description="Acidic residues" evidence="2">
    <location>
        <begin position="113"/>
        <end position="159"/>
    </location>
</feature>
<evidence type="ECO:0000250" key="1"/>
<evidence type="ECO:0000256" key="2">
    <source>
        <dbReference type="SAM" id="MobiDB-lite"/>
    </source>
</evidence>
<evidence type="ECO:0000305" key="3"/>
<keyword id="KW-0010">Activator</keyword>
<keyword id="KW-0539">Nucleus</keyword>
<keyword id="KW-1185">Reference proteome</keyword>
<keyword id="KW-0804">Transcription</keyword>
<keyword id="KW-0805">Transcription regulation</keyword>
<sequence length="168" mass="20031">METPESEKTRFEVECEFVQALANPNYLNFLAQRGYFKEEYFVNYLKYLLYWKNPQYARCLKFPQCLHMLEALQSQQFRDAMAYGPSAKFVEDQVVLQWQFYLRKRHRLCMLPEGEDQDVEESEEETVENEQKESEDEEDVVIVEKPEDEQEEQAEEAAEPTDTSLLNT</sequence>
<dbReference type="EMBL" id="HE600913">
    <property type="protein sequence ID" value="CAP31388.2"/>
    <property type="molecule type" value="Genomic_DNA"/>
</dbReference>
<dbReference type="SMR" id="Q61DP3"/>
<dbReference type="FunCoup" id="Q61DP3">
    <property type="interactions" value="2068"/>
</dbReference>
<dbReference type="STRING" id="6238.Q61DP3"/>
<dbReference type="WormBase" id="CBG12403">
    <property type="protein sequence ID" value="CBP17441"/>
    <property type="gene ID" value="WBGene00033358"/>
    <property type="gene designation" value="Cbr-mdt-31"/>
</dbReference>
<dbReference type="eggNOG" id="KOG4086">
    <property type="taxonomic scope" value="Eukaryota"/>
</dbReference>
<dbReference type="HOGENOM" id="CLU_071681_5_1_1"/>
<dbReference type="InParanoid" id="Q61DP3"/>
<dbReference type="OMA" id="KRHRLCM"/>
<dbReference type="Proteomes" id="UP000008549">
    <property type="component" value="Unassembled WGS sequence"/>
</dbReference>
<dbReference type="GO" id="GO:0070847">
    <property type="term" value="C:core mediator complex"/>
    <property type="evidence" value="ECO:0000318"/>
    <property type="project" value="GO_Central"/>
</dbReference>
<dbReference type="GO" id="GO:0016592">
    <property type="term" value="C:mediator complex"/>
    <property type="evidence" value="ECO:0000318"/>
    <property type="project" value="GO_Central"/>
</dbReference>
<dbReference type="GO" id="GO:0003712">
    <property type="term" value="F:transcription coregulator activity"/>
    <property type="evidence" value="ECO:0007669"/>
    <property type="project" value="InterPro"/>
</dbReference>
<dbReference type="GO" id="GO:0006357">
    <property type="term" value="P:regulation of transcription by RNA polymerase II"/>
    <property type="evidence" value="ECO:0000318"/>
    <property type="project" value="GO_Central"/>
</dbReference>
<dbReference type="FunFam" id="1.10.10.1340:FF:000001">
    <property type="entry name" value="Mediator of RNA polymerase II transcription subunit 31"/>
    <property type="match status" value="1"/>
</dbReference>
<dbReference type="Gene3D" id="1.10.10.1340">
    <property type="entry name" value="Mediator of RNA polymerase II, submodule Med31 (Soh1)"/>
    <property type="match status" value="1"/>
</dbReference>
<dbReference type="InterPro" id="IPR038089">
    <property type="entry name" value="Med31_sf"/>
</dbReference>
<dbReference type="InterPro" id="IPR008831">
    <property type="entry name" value="Mediator_Med31"/>
</dbReference>
<dbReference type="PANTHER" id="PTHR13186">
    <property type="entry name" value="MEDIATOR OF RNA POLYMERASE II TRANSCRIPTION SUBUNIT 31"/>
    <property type="match status" value="1"/>
</dbReference>
<dbReference type="Pfam" id="PF05669">
    <property type="entry name" value="Med31"/>
    <property type="match status" value="1"/>
</dbReference>
<gene>
    <name type="primary">mdt-31</name>
    <name type="synonym">soh-1</name>
    <name type="ORF">CBG12403</name>
</gene>
<accession>Q61DP3</accession>
<accession>A8XFC7</accession>
<name>MED31_CAEBR</name>
<organism>
    <name type="scientific">Caenorhabditis briggsae</name>
    <dbReference type="NCBI Taxonomy" id="6238"/>
    <lineage>
        <taxon>Eukaryota</taxon>
        <taxon>Metazoa</taxon>
        <taxon>Ecdysozoa</taxon>
        <taxon>Nematoda</taxon>
        <taxon>Chromadorea</taxon>
        <taxon>Rhabditida</taxon>
        <taxon>Rhabditina</taxon>
        <taxon>Rhabditomorpha</taxon>
        <taxon>Rhabditoidea</taxon>
        <taxon>Rhabditidae</taxon>
        <taxon>Peloderinae</taxon>
        <taxon>Caenorhabditis</taxon>
    </lineage>
</organism>